<protein>
    <recommendedName>
        <fullName evidence="1">2-succinyl-5-enolpyruvyl-6-hydroxy-3-cyclohexene-1-carboxylate synthase</fullName>
        <shortName evidence="1">SEPHCHC synthase</shortName>
        <ecNumber evidence="1">2.2.1.9</ecNumber>
    </recommendedName>
    <alternativeName>
        <fullName evidence="1">Menaquinone biosynthesis protein MenD</fullName>
    </alternativeName>
</protein>
<sequence>MSVSAFNRRWAAVILEALTRHGVRHICIAPGSRSTPLTLAAAENSAFIHHTHFDERGLGHLALGLAKVSKQPVAVIVTSGTAVANLYPALIEAGLTGEKLILLTADRPPELIDCGANQAIRQPGMFASHPTHSISLPRPTQDIPARWLVSTIDHALGTLHAGGVHINCPFAEPLYGEMDDTGISWQQRLGDWWQDDKPWLREAPRRESEKQRDWFFWRQKRGVVVAGRMSAEEGKKVALWAQTLGWPLIGDVLSQTGQPLPCADLWLGNAKATSELQQAQIVVQLGSSLTGKRLLQWQASCEPEEYWIVDDIEGRLDPAHHRGRRLIANIADWLELHPAEKRQPWCVEIPRLAEQAMQAVIARRDAFGEAQLAHRISDYLPEQGQLFVGNSLVVRLIDALSQLPAGYPVYSNRGASGIDGLLSTAAGVQRASGKPTLAIVGDLSALYDLNALALLRQVSAPLVLIVVNNNGGQIFSLLPTPKSERERFYLMPQNVHFEHAAAMFELKYHRPQNWQELETTLVDAWRTPTTTVIEMVVNDTDGAQTLQQLLAQVSHL</sequence>
<proteinExistence type="inferred from homology"/>
<reference key="1">
    <citation type="journal article" date="2002" name="Proc. Natl. Acad. Sci. U.S.A.">
        <title>Extensive mosaic structure revealed by the complete genome sequence of uropathogenic Escherichia coli.</title>
        <authorList>
            <person name="Welch R.A."/>
            <person name="Burland V."/>
            <person name="Plunkett G. III"/>
            <person name="Redford P."/>
            <person name="Roesch P."/>
            <person name="Rasko D."/>
            <person name="Buckles E.L."/>
            <person name="Liou S.-R."/>
            <person name="Boutin A."/>
            <person name="Hackett J."/>
            <person name="Stroud D."/>
            <person name="Mayhew G.F."/>
            <person name="Rose D.J."/>
            <person name="Zhou S."/>
            <person name="Schwartz D.C."/>
            <person name="Perna N.T."/>
            <person name="Mobley H.L.T."/>
            <person name="Donnenberg M.S."/>
            <person name="Blattner F.R."/>
        </authorList>
    </citation>
    <scope>NUCLEOTIDE SEQUENCE [LARGE SCALE GENOMIC DNA]</scope>
    <source>
        <strain>CFT073 / ATCC 700928 / UPEC</strain>
    </source>
</reference>
<dbReference type="EC" id="2.2.1.9" evidence="1"/>
<dbReference type="EMBL" id="AE014075">
    <property type="protein sequence ID" value="AAN81262.1"/>
    <property type="status" value="ALT_INIT"/>
    <property type="molecule type" value="Genomic_DNA"/>
</dbReference>
<dbReference type="RefSeq" id="WP_000116370.1">
    <property type="nucleotide sequence ID" value="NZ_CP051263.1"/>
</dbReference>
<dbReference type="SMR" id="Q8FFL1"/>
<dbReference type="STRING" id="199310.c2808"/>
<dbReference type="KEGG" id="ecc:c2808"/>
<dbReference type="eggNOG" id="COG1165">
    <property type="taxonomic scope" value="Bacteria"/>
</dbReference>
<dbReference type="HOGENOM" id="CLU_006051_3_0_6"/>
<dbReference type="UniPathway" id="UPA00079"/>
<dbReference type="UniPathway" id="UPA01057">
    <property type="reaction ID" value="UER00164"/>
</dbReference>
<dbReference type="Proteomes" id="UP000001410">
    <property type="component" value="Chromosome"/>
</dbReference>
<dbReference type="GO" id="GO:0070204">
    <property type="term" value="F:2-succinyl-5-enolpyruvyl-6-hydroxy-3-cyclohexene-1-carboxylic-acid synthase activity"/>
    <property type="evidence" value="ECO:0007669"/>
    <property type="project" value="UniProtKB-UniRule"/>
</dbReference>
<dbReference type="GO" id="GO:0000287">
    <property type="term" value="F:magnesium ion binding"/>
    <property type="evidence" value="ECO:0007669"/>
    <property type="project" value="UniProtKB-UniRule"/>
</dbReference>
<dbReference type="GO" id="GO:0030145">
    <property type="term" value="F:manganese ion binding"/>
    <property type="evidence" value="ECO:0007669"/>
    <property type="project" value="UniProtKB-UniRule"/>
</dbReference>
<dbReference type="GO" id="GO:0030976">
    <property type="term" value="F:thiamine pyrophosphate binding"/>
    <property type="evidence" value="ECO:0007669"/>
    <property type="project" value="UniProtKB-UniRule"/>
</dbReference>
<dbReference type="GO" id="GO:0009234">
    <property type="term" value="P:menaquinone biosynthetic process"/>
    <property type="evidence" value="ECO:0007669"/>
    <property type="project" value="UniProtKB-UniRule"/>
</dbReference>
<dbReference type="CDD" id="cd07037">
    <property type="entry name" value="TPP_PYR_MenD"/>
    <property type="match status" value="1"/>
</dbReference>
<dbReference type="CDD" id="cd02009">
    <property type="entry name" value="TPP_SHCHC_synthase"/>
    <property type="match status" value="1"/>
</dbReference>
<dbReference type="FunFam" id="3.40.50.1220:FF:000010">
    <property type="entry name" value="2-succinyl-5-enolpyruvyl-6-hydroxy-3-cyclohexene-1-carboxylate synthase"/>
    <property type="match status" value="1"/>
</dbReference>
<dbReference type="FunFam" id="3.40.50.970:FF:000029">
    <property type="entry name" value="2-succinyl-5-enolpyruvyl-6-hydroxy-3-cyclohexene-1-carboxylate synthase"/>
    <property type="match status" value="1"/>
</dbReference>
<dbReference type="Gene3D" id="3.40.50.970">
    <property type="match status" value="2"/>
</dbReference>
<dbReference type="Gene3D" id="3.40.50.1220">
    <property type="entry name" value="TPP-binding domain"/>
    <property type="match status" value="1"/>
</dbReference>
<dbReference type="HAMAP" id="MF_01659">
    <property type="entry name" value="MenD"/>
    <property type="match status" value="1"/>
</dbReference>
<dbReference type="InterPro" id="IPR004433">
    <property type="entry name" value="MenaQ_synth_MenD"/>
</dbReference>
<dbReference type="InterPro" id="IPR032264">
    <property type="entry name" value="MenD_middle"/>
</dbReference>
<dbReference type="InterPro" id="IPR029061">
    <property type="entry name" value="THDP-binding"/>
</dbReference>
<dbReference type="InterPro" id="IPR012001">
    <property type="entry name" value="Thiamin_PyroP_enz_TPP-bd_dom"/>
</dbReference>
<dbReference type="InterPro" id="IPR011766">
    <property type="entry name" value="TPP_enzyme_TPP-bd"/>
</dbReference>
<dbReference type="NCBIfam" id="TIGR00173">
    <property type="entry name" value="menD"/>
    <property type="match status" value="1"/>
</dbReference>
<dbReference type="PANTHER" id="PTHR42916">
    <property type="entry name" value="2-SUCCINYL-5-ENOLPYRUVYL-6-HYDROXY-3-CYCLOHEXENE-1-CARBOXYLATE SYNTHASE"/>
    <property type="match status" value="1"/>
</dbReference>
<dbReference type="PANTHER" id="PTHR42916:SF1">
    <property type="entry name" value="PROTEIN PHYLLO, CHLOROPLASTIC"/>
    <property type="match status" value="1"/>
</dbReference>
<dbReference type="Pfam" id="PF02775">
    <property type="entry name" value="TPP_enzyme_C"/>
    <property type="match status" value="1"/>
</dbReference>
<dbReference type="Pfam" id="PF16582">
    <property type="entry name" value="TPP_enzyme_M_2"/>
    <property type="match status" value="1"/>
</dbReference>
<dbReference type="Pfam" id="PF02776">
    <property type="entry name" value="TPP_enzyme_N"/>
    <property type="match status" value="1"/>
</dbReference>
<dbReference type="PIRSF" id="PIRSF004983">
    <property type="entry name" value="MenD"/>
    <property type="match status" value="1"/>
</dbReference>
<dbReference type="SUPFAM" id="SSF52518">
    <property type="entry name" value="Thiamin diphosphate-binding fold (THDP-binding)"/>
    <property type="match status" value="2"/>
</dbReference>
<organism>
    <name type="scientific">Escherichia coli O6:H1 (strain CFT073 / ATCC 700928 / UPEC)</name>
    <dbReference type="NCBI Taxonomy" id="199310"/>
    <lineage>
        <taxon>Bacteria</taxon>
        <taxon>Pseudomonadati</taxon>
        <taxon>Pseudomonadota</taxon>
        <taxon>Gammaproteobacteria</taxon>
        <taxon>Enterobacterales</taxon>
        <taxon>Enterobacteriaceae</taxon>
        <taxon>Escherichia</taxon>
    </lineage>
</organism>
<feature type="chain" id="PRO_0000341744" description="2-succinyl-5-enolpyruvyl-6-hydroxy-3-cyclohexene-1-carboxylate synthase">
    <location>
        <begin position="1"/>
        <end position="556"/>
    </location>
</feature>
<evidence type="ECO:0000255" key="1">
    <source>
        <dbReference type="HAMAP-Rule" id="MF_01659"/>
    </source>
</evidence>
<evidence type="ECO:0000305" key="2"/>
<keyword id="KW-0460">Magnesium</keyword>
<keyword id="KW-0464">Manganese</keyword>
<keyword id="KW-0474">Menaquinone biosynthesis</keyword>
<keyword id="KW-0479">Metal-binding</keyword>
<keyword id="KW-1185">Reference proteome</keyword>
<keyword id="KW-0786">Thiamine pyrophosphate</keyword>
<keyword id="KW-0808">Transferase</keyword>
<gene>
    <name evidence="1" type="primary">menD</name>
    <name type="ordered locus">c2808</name>
</gene>
<comment type="function">
    <text evidence="1">Catalyzes the thiamine diphosphate-dependent decarboxylation of 2-oxoglutarate and the subsequent addition of the resulting succinic semialdehyde-thiamine pyrophosphate anion to isochorismate to yield 2-succinyl-5-enolpyruvyl-6-hydroxy-3-cyclohexene-1-carboxylate (SEPHCHC).</text>
</comment>
<comment type="catalytic activity">
    <reaction evidence="1">
        <text>isochorismate + 2-oxoglutarate + H(+) = 5-enolpyruvoyl-6-hydroxy-2-succinyl-cyclohex-3-ene-1-carboxylate + CO2</text>
        <dbReference type="Rhea" id="RHEA:25593"/>
        <dbReference type="ChEBI" id="CHEBI:15378"/>
        <dbReference type="ChEBI" id="CHEBI:16526"/>
        <dbReference type="ChEBI" id="CHEBI:16810"/>
        <dbReference type="ChEBI" id="CHEBI:29780"/>
        <dbReference type="ChEBI" id="CHEBI:58818"/>
        <dbReference type="EC" id="2.2.1.9"/>
    </reaction>
</comment>
<comment type="cofactor">
    <cofactor evidence="1">
        <name>Mg(2+)</name>
        <dbReference type="ChEBI" id="CHEBI:18420"/>
    </cofactor>
    <cofactor evidence="1">
        <name>Mn(2+)</name>
        <dbReference type="ChEBI" id="CHEBI:29035"/>
    </cofactor>
</comment>
<comment type="cofactor">
    <cofactor evidence="1">
        <name>thiamine diphosphate</name>
        <dbReference type="ChEBI" id="CHEBI:58937"/>
    </cofactor>
    <text evidence="1">Binds 1 thiamine pyrophosphate per subunit.</text>
</comment>
<comment type="pathway">
    <text evidence="1">Quinol/quinone metabolism; 1,4-dihydroxy-2-naphthoate biosynthesis; 1,4-dihydroxy-2-naphthoate from chorismate: step 2/7.</text>
</comment>
<comment type="pathway">
    <text evidence="1">Quinol/quinone metabolism; menaquinone biosynthesis.</text>
</comment>
<comment type="subunit">
    <text evidence="1">Homodimer.</text>
</comment>
<comment type="similarity">
    <text evidence="1">Belongs to the TPP enzyme family. MenD subfamily.</text>
</comment>
<comment type="sequence caution" evidence="2">
    <conflict type="erroneous initiation">
        <sequence resource="EMBL-CDS" id="AAN81262"/>
    </conflict>
</comment>
<accession>Q8FFL1</accession>
<name>MEND_ECOL6</name>